<gene>
    <name evidence="1" type="primary">argG</name>
    <name type="ordered locus">Moth_2285</name>
</gene>
<organism>
    <name type="scientific">Moorella thermoacetica (strain ATCC 39073 / JCM 9320)</name>
    <dbReference type="NCBI Taxonomy" id="264732"/>
    <lineage>
        <taxon>Bacteria</taxon>
        <taxon>Bacillati</taxon>
        <taxon>Bacillota</taxon>
        <taxon>Clostridia</taxon>
        <taxon>Moorellales</taxon>
        <taxon>Moorellaceae</taxon>
        <taxon>Moorella</taxon>
    </lineage>
</organism>
<name>ASSY_MOOTA</name>
<evidence type="ECO:0000255" key="1">
    <source>
        <dbReference type="HAMAP-Rule" id="MF_00005"/>
    </source>
</evidence>
<keyword id="KW-0028">Amino-acid biosynthesis</keyword>
<keyword id="KW-0055">Arginine biosynthesis</keyword>
<keyword id="KW-0067">ATP-binding</keyword>
<keyword id="KW-0963">Cytoplasm</keyword>
<keyword id="KW-0436">Ligase</keyword>
<keyword id="KW-0547">Nucleotide-binding</keyword>
<sequence>MKGVFTVAEKVVLAYSGGLDTSIIIPWLKETYGYEVIAVAVDVGQGEELEPLEEKAIKSGASKIYILDKKKEFVEEYIWPTLKAGAVYEGKYLLGTSFARPLIAKCLVEVAAQEGATAVAHGATGKGNDQVRFELGVKALNPQLKVIAPWRIWNIRSREEAMDYAAARGIPVPVTKDRPYSMDRNLWHLSHEGGDLEDPWNAPGDDLYLIITPPEQAPDKPTYVTIDFEKGIPVAVDGEKLDAVALVEKLNDLAAANGVGIVDIVENRLVGMKSRGVYETPGGTILYTAHRELEYLTLDRMTMHFKEMVAAKYAELVYDGNWFSPLKKALDAFVDSTQETVTGTVRLKLYKGSCTPAGVKSPYSIYNEDLVTFGAGGDYDHKDATGFINLFGLPLKVRALMEQKTGLR</sequence>
<accession>Q2RG67</accession>
<proteinExistence type="inferred from homology"/>
<comment type="catalytic activity">
    <reaction evidence="1">
        <text>L-citrulline + L-aspartate + ATP = 2-(N(omega)-L-arginino)succinate + AMP + diphosphate + H(+)</text>
        <dbReference type="Rhea" id="RHEA:10932"/>
        <dbReference type="ChEBI" id="CHEBI:15378"/>
        <dbReference type="ChEBI" id="CHEBI:29991"/>
        <dbReference type="ChEBI" id="CHEBI:30616"/>
        <dbReference type="ChEBI" id="CHEBI:33019"/>
        <dbReference type="ChEBI" id="CHEBI:57472"/>
        <dbReference type="ChEBI" id="CHEBI:57743"/>
        <dbReference type="ChEBI" id="CHEBI:456215"/>
        <dbReference type="EC" id="6.3.4.5"/>
    </reaction>
</comment>
<comment type="pathway">
    <text evidence="1">Amino-acid biosynthesis; L-arginine biosynthesis; L-arginine from L-ornithine and carbamoyl phosphate: step 2/3.</text>
</comment>
<comment type="subunit">
    <text evidence="1">Homotetramer.</text>
</comment>
<comment type="subcellular location">
    <subcellularLocation>
        <location evidence="1">Cytoplasm</location>
    </subcellularLocation>
</comment>
<comment type="similarity">
    <text evidence="1">Belongs to the argininosuccinate synthase family. Type 1 subfamily.</text>
</comment>
<dbReference type="EC" id="6.3.4.5" evidence="1"/>
<dbReference type="EMBL" id="CP000232">
    <property type="protein sequence ID" value="ABC20572.1"/>
    <property type="molecule type" value="Genomic_DNA"/>
</dbReference>
<dbReference type="RefSeq" id="YP_431115.1">
    <property type="nucleotide sequence ID" value="NC_007644.1"/>
</dbReference>
<dbReference type="SMR" id="Q2RG67"/>
<dbReference type="STRING" id="264732.Moth_2285"/>
<dbReference type="EnsemblBacteria" id="ABC20572">
    <property type="protein sequence ID" value="ABC20572"/>
    <property type="gene ID" value="Moth_2285"/>
</dbReference>
<dbReference type="KEGG" id="mta:Moth_2285"/>
<dbReference type="PATRIC" id="fig|264732.11.peg.2489"/>
<dbReference type="eggNOG" id="COG0137">
    <property type="taxonomic scope" value="Bacteria"/>
</dbReference>
<dbReference type="HOGENOM" id="CLU_032784_4_2_9"/>
<dbReference type="OrthoDB" id="9801641at2"/>
<dbReference type="UniPathway" id="UPA00068">
    <property type="reaction ID" value="UER00113"/>
</dbReference>
<dbReference type="GO" id="GO:0005737">
    <property type="term" value="C:cytoplasm"/>
    <property type="evidence" value="ECO:0007669"/>
    <property type="project" value="UniProtKB-SubCell"/>
</dbReference>
<dbReference type="GO" id="GO:0004055">
    <property type="term" value="F:argininosuccinate synthase activity"/>
    <property type="evidence" value="ECO:0007669"/>
    <property type="project" value="UniProtKB-UniRule"/>
</dbReference>
<dbReference type="GO" id="GO:0005524">
    <property type="term" value="F:ATP binding"/>
    <property type="evidence" value="ECO:0007669"/>
    <property type="project" value="UniProtKB-UniRule"/>
</dbReference>
<dbReference type="GO" id="GO:0000053">
    <property type="term" value="P:argininosuccinate metabolic process"/>
    <property type="evidence" value="ECO:0007669"/>
    <property type="project" value="TreeGrafter"/>
</dbReference>
<dbReference type="GO" id="GO:0006526">
    <property type="term" value="P:L-arginine biosynthetic process"/>
    <property type="evidence" value="ECO:0007669"/>
    <property type="project" value="UniProtKB-UniRule"/>
</dbReference>
<dbReference type="GO" id="GO:0000050">
    <property type="term" value="P:urea cycle"/>
    <property type="evidence" value="ECO:0007669"/>
    <property type="project" value="TreeGrafter"/>
</dbReference>
<dbReference type="CDD" id="cd01999">
    <property type="entry name" value="ASS"/>
    <property type="match status" value="1"/>
</dbReference>
<dbReference type="FunFam" id="3.40.50.620:FF:000019">
    <property type="entry name" value="Argininosuccinate synthase"/>
    <property type="match status" value="1"/>
</dbReference>
<dbReference type="FunFam" id="3.90.1260.10:FF:000007">
    <property type="entry name" value="Argininosuccinate synthase"/>
    <property type="match status" value="1"/>
</dbReference>
<dbReference type="Gene3D" id="3.90.1260.10">
    <property type="entry name" value="Argininosuccinate synthetase, chain A, domain 2"/>
    <property type="match status" value="1"/>
</dbReference>
<dbReference type="Gene3D" id="3.40.50.620">
    <property type="entry name" value="HUPs"/>
    <property type="match status" value="1"/>
</dbReference>
<dbReference type="Gene3D" id="1.20.5.470">
    <property type="entry name" value="Single helix bin"/>
    <property type="match status" value="1"/>
</dbReference>
<dbReference type="HAMAP" id="MF_00005">
    <property type="entry name" value="Arg_succ_synth_type1"/>
    <property type="match status" value="1"/>
</dbReference>
<dbReference type="InterPro" id="IPR048268">
    <property type="entry name" value="Arginosuc_syn_C"/>
</dbReference>
<dbReference type="InterPro" id="IPR048267">
    <property type="entry name" value="Arginosuc_syn_N"/>
</dbReference>
<dbReference type="InterPro" id="IPR001518">
    <property type="entry name" value="Arginosuc_synth"/>
</dbReference>
<dbReference type="InterPro" id="IPR018223">
    <property type="entry name" value="Arginosuc_synth_CS"/>
</dbReference>
<dbReference type="InterPro" id="IPR023434">
    <property type="entry name" value="Arginosuc_synth_type_1_subfam"/>
</dbReference>
<dbReference type="InterPro" id="IPR024074">
    <property type="entry name" value="AS_cat/multimer_dom_body"/>
</dbReference>
<dbReference type="InterPro" id="IPR014729">
    <property type="entry name" value="Rossmann-like_a/b/a_fold"/>
</dbReference>
<dbReference type="NCBIfam" id="TIGR00032">
    <property type="entry name" value="argG"/>
    <property type="match status" value="1"/>
</dbReference>
<dbReference type="NCBIfam" id="NF001770">
    <property type="entry name" value="PRK00509.1"/>
    <property type="match status" value="1"/>
</dbReference>
<dbReference type="PANTHER" id="PTHR11587">
    <property type="entry name" value="ARGININOSUCCINATE SYNTHASE"/>
    <property type="match status" value="1"/>
</dbReference>
<dbReference type="PANTHER" id="PTHR11587:SF2">
    <property type="entry name" value="ARGININOSUCCINATE SYNTHASE"/>
    <property type="match status" value="1"/>
</dbReference>
<dbReference type="Pfam" id="PF20979">
    <property type="entry name" value="Arginosuc_syn_C"/>
    <property type="match status" value="1"/>
</dbReference>
<dbReference type="Pfam" id="PF00764">
    <property type="entry name" value="Arginosuc_synth"/>
    <property type="match status" value="1"/>
</dbReference>
<dbReference type="SUPFAM" id="SSF52402">
    <property type="entry name" value="Adenine nucleotide alpha hydrolases-like"/>
    <property type="match status" value="1"/>
</dbReference>
<dbReference type="SUPFAM" id="SSF69864">
    <property type="entry name" value="Argininosuccinate synthetase, C-terminal domain"/>
    <property type="match status" value="1"/>
</dbReference>
<dbReference type="PROSITE" id="PS00564">
    <property type="entry name" value="ARGININOSUCCIN_SYN_1"/>
    <property type="match status" value="1"/>
</dbReference>
<dbReference type="PROSITE" id="PS00565">
    <property type="entry name" value="ARGININOSUCCIN_SYN_2"/>
    <property type="match status" value="1"/>
</dbReference>
<protein>
    <recommendedName>
        <fullName evidence="1">Argininosuccinate synthase</fullName>
        <ecNumber evidence="1">6.3.4.5</ecNumber>
    </recommendedName>
    <alternativeName>
        <fullName evidence="1">Citrulline--aspartate ligase</fullName>
    </alternativeName>
</protein>
<feature type="chain" id="PRO_0000263940" description="Argininosuccinate synthase">
    <location>
        <begin position="1"/>
        <end position="408"/>
    </location>
</feature>
<feature type="binding site" evidence="1">
    <location>
        <begin position="14"/>
        <end position="22"/>
    </location>
    <ligand>
        <name>ATP</name>
        <dbReference type="ChEBI" id="CHEBI:30616"/>
    </ligand>
</feature>
<feature type="binding site" evidence="1">
    <location>
        <position position="92"/>
    </location>
    <ligand>
        <name>L-citrulline</name>
        <dbReference type="ChEBI" id="CHEBI:57743"/>
    </ligand>
</feature>
<feature type="binding site" evidence="1">
    <location>
        <position position="97"/>
    </location>
    <ligand>
        <name>L-citrulline</name>
        <dbReference type="ChEBI" id="CHEBI:57743"/>
    </ligand>
</feature>
<feature type="binding site" evidence="1">
    <location>
        <position position="122"/>
    </location>
    <ligand>
        <name>ATP</name>
        <dbReference type="ChEBI" id="CHEBI:30616"/>
    </ligand>
</feature>
<feature type="binding site" evidence="1">
    <location>
        <position position="124"/>
    </location>
    <ligand>
        <name>L-aspartate</name>
        <dbReference type="ChEBI" id="CHEBI:29991"/>
    </ligand>
</feature>
<feature type="binding site" evidence="1">
    <location>
        <position position="128"/>
    </location>
    <ligand>
        <name>L-aspartate</name>
        <dbReference type="ChEBI" id="CHEBI:29991"/>
    </ligand>
</feature>
<feature type="binding site" evidence="1">
    <location>
        <position position="128"/>
    </location>
    <ligand>
        <name>L-citrulline</name>
        <dbReference type="ChEBI" id="CHEBI:57743"/>
    </ligand>
</feature>
<feature type="binding site" evidence="1">
    <location>
        <position position="129"/>
    </location>
    <ligand>
        <name>L-aspartate</name>
        <dbReference type="ChEBI" id="CHEBI:29991"/>
    </ligand>
</feature>
<feature type="binding site" evidence="1">
    <location>
        <position position="132"/>
    </location>
    <ligand>
        <name>L-citrulline</name>
        <dbReference type="ChEBI" id="CHEBI:57743"/>
    </ligand>
</feature>
<feature type="binding site" evidence="1">
    <location>
        <position position="181"/>
    </location>
    <ligand>
        <name>L-citrulline</name>
        <dbReference type="ChEBI" id="CHEBI:57743"/>
    </ligand>
</feature>
<feature type="binding site" evidence="1">
    <location>
        <position position="190"/>
    </location>
    <ligand>
        <name>L-citrulline</name>
        <dbReference type="ChEBI" id="CHEBI:57743"/>
    </ligand>
</feature>
<feature type="binding site" evidence="1">
    <location>
        <position position="266"/>
    </location>
    <ligand>
        <name>L-citrulline</name>
        <dbReference type="ChEBI" id="CHEBI:57743"/>
    </ligand>
</feature>
<feature type="binding site" evidence="1">
    <location>
        <position position="278"/>
    </location>
    <ligand>
        <name>L-citrulline</name>
        <dbReference type="ChEBI" id="CHEBI:57743"/>
    </ligand>
</feature>
<reference key="1">
    <citation type="journal article" date="2008" name="Environ. Microbiol.">
        <title>The complete genome sequence of Moorella thermoacetica (f. Clostridium thermoaceticum).</title>
        <authorList>
            <person name="Pierce E."/>
            <person name="Xie G."/>
            <person name="Barabote R.D."/>
            <person name="Saunders E."/>
            <person name="Han C.S."/>
            <person name="Detter J.C."/>
            <person name="Richardson P."/>
            <person name="Brettin T.S."/>
            <person name="Das A."/>
            <person name="Ljungdahl L.G."/>
            <person name="Ragsdale S.W."/>
        </authorList>
    </citation>
    <scope>NUCLEOTIDE SEQUENCE [LARGE SCALE GENOMIC DNA]</scope>
    <source>
        <strain>ATCC 39073 / JCM 9320</strain>
    </source>
</reference>